<sequence length="112" mass="12082">MEPGRFRNRVKILTFTTSRDPSGQPVESWTGGNPVPAEVKGISGREQLSGGAETAQATIRVWMRFRSELNASSRLEVLSGPYKGQVLNIIGPPVANATGTRLEILCKTGAEK</sequence>
<keyword id="KW-1185">Reference proteome</keyword>
<keyword id="KW-1171">Viral genome ejection through host cell envelope</keyword>
<keyword id="KW-1243">Viral long flexible tail ejection system</keyword>
<keyword id="KW-1162">Viral penetration into host cytoplasm</keyword>
<keyword id="KW-0946">Virion</keyword>
<keyword id="KW-1160">Virus entry into host cell</keyword>
<dbReference type="EMBL" id="AF069529">
    <property type="protein sequence ID" value="AAF31100.1"/>
    <property type="molecule type" value="Genomic_DNA"/>
</dbReference>
<dbReference type="RefSeq" id="NP_037703.1">
    <property type="nucleotide sequence ID" value="NC_002167.1"/>
</dbReference>
<dbReference type="GeneID" id="1262533"/>
<dbReference type="KEGG" id="vg:1262533"/>
<dbReference type="Proteomes" id="UP000002576">
    <property type="component" value="Genome"/>
</dbReference>
<dbReference type="Gene3D" id="2.40.10.270">
    <property type="entry name" value="Bacteriophage SPP1 head-tail adaptor protein"/>
    <property type="match status" value="1"/>
</dbReference>
<dbReference type="InterPro" id="IPR008767">
    <property type="entry name" value="Phage_SPP1_head-tail_adaptor"/>
</dbReference>
<dbReference type="InterPro" id="IPR038666">
    <property type="entry name" value="SSP1_head-tail_sf"/>
</dbReference>
<dbReference type="NCBIfam" id="TIGR01563">
    <property type="entry name" value="gp16_SPP1"/>
    <property type="match status" value="1"/>
</dbReference>
<dbReference type="Pfam" id="PF05521">
    <property type="entry name" value="Phage_H_T_join"/>
    <property type="match status" value="1"/>
</dbReference>
<protein>
    <recommendedName>
        <fullName>Head completion protein gp7</fullName>
    </recommendedName>
    <alternativeName>
        <fullName>Connector protein gp7</fullName>
    </alternativeName>
    <alternativeName>
        <fullName>Gene product 7</fullName>
        <shortName>Gp7</shortName>
    </alternativeName>
    <alternativeName>
        <fullName>Stopper protein gp7</fullName>
    </alternativeName>
</protein>
<reference key="1">
    <citation type="journal article" date="2000" name="J. Mol. Biol.">
        <title>Genomic sequences of bacteriophages HK97 and HK022: pervasive genetic mosaicism in the lambdoid bacteriophages.</title>
        <authorList>
            <person name="Juhala R.J."/>
            <person name="Ford M.E."/>
            <person name="Duda R.L."/>
            <person name="Youlton A."/>
            <person name="Hatfull G.F."/>
            <person name="Hendrix R.W."/>
        </authorList>
    </citation>
    <scope>NUCLEOTIDE SEQUENCE [GENOMIC DNA]</scope>
</reference>
<reference key="2">
    <citation type="journal article" date="2010" name="J. Mol. Biol.">
        <title>The crystal structure of bacteriophage HK97 gp6: defining a large family of head-tail connector proteins.</title>
        <authorList>
            <person name="Cardarelli L."/>
            <person name="Lam R."/>
            <person name="Tuite A."/>
            <person name="Baker L.A."/>
            <person name="Sadowski P.D."/>
            <person name="Radford D.R."/>
            <person name="Rubinstein J.L."/>
            <person name="Battaile K.P."/>
            <person name="Chirgadze N."/>
            <person name="Maxwell K.L."/>
            <person name="Davidson A.R."/>
        </authorList>
    </citation>
    <scope>FUNCTION</scope>
    <scope>SUBCELLULAR LOCATION</scope>
</reference>
<name>GP7_BPHK7</name>
<feature type="chain" id="PRO_0000462345" description="Head completion protein gp7">
    <location>
        <begin position="1"/>
        <end position="112"/>
    </location>
</feature>
<organismHost>
    <name type="scientific">Escherichia coli</name>
    <dbReference type="NCBI Taxonomy" id="562"/>
</organismHost>
<organism>
    <name type="scientific">Enterobacteria phage HK97</name>
    <name type="common">Bacteriophage HK97</name>
    <dbReference type="NCBI Taxonomy" id="2681617"/>
    <lineage>
        <taxon>Viruses</taxon>
        <taxon>Duplodnaviria</taxon>
        <taxon>Heunggongvirae</taxon>
        <taxon>Uroviricota</taxon>
        <taxon>Caudoviricetes</taxon>
        <taxon>Hendrixvirinae</taxon>
        <taxon>Byrnievirus</taxon>
        <taxon>Byrnievirus HK97</taxon>
    </lineage>
</organism>
<accession>Q9MCT0</accession>
<comment type="function">
    <text evidence="1 2">Functions as a stopper that is part of the head-tail connector and that locks the viral DNA in the capsid (PubMed:19895817). Following tail attachment to the entry receptor, seems to open by a diaphragm-like motion, allowing the genome to exit the capsid through the tail tube to the host cell. During assembly, functions as a docking platform which the preassembled tail tapered by the head-tail joining protein gp17 can bind to (By similarity).</text>
</comment>
<comment type="subunit">
    <text evidence="1">Interacts with the connector protein gp15. Interacts with the head-tail joining protein gp17.</text>
</comment>
<comment type="subcellular location">
    <subcellularLocation>
        <location evidence="2">Virion</location>
    </subcellularLocation>
    <text evidence="1">Part of the connector between the portal and the tail.</text>
</comment>
<comment type="similarity">
    <text evidence="3">Belongs to the Caudoviricetes gp7/gp16 head completion protein family.</text>
</comment>
<gene>
    <name evidence="4" type="primary">7</name>
</gene>
<proteinExistence type="inferred from homology"/>
<evidence type="ECO:0000250" key="1">
    <source>
        <dbReference type="UniProtKB" id="O48446"/>
    </source>
</evidence>
<evidence type="ECO:0000269" key="2">
    <source>
    </source>
</evidence>
<evidence type="ECO:0000305" key="3"/>
<evidence type="ECO:0000312" key="4">
    <source>
        <dbReference type="EMBL" id="AAF31100.1"/>
    </source>
</evidence>